<keyword id="KW-1185">Reference proteome</keyword>
<dbReference type="EMBL" id="Z18946">
    <property type="protein sequence ID" value="CAA79454.1"/>
    <property type="molecule type" value="Genomic_DNA"/>
</dbReference>
<dbReference type="PIR" id="S31023">
    <property type="entry name" value="S31023"/>
</dbReference>
<dbReference type="RefSeq" id="NP_039742.1">
    <property type="nucleotide sequence ID" value="NC_001335.1"/>
</dbReference>
<dbReference type="GeneID" id="2942975"/>
<dbReference type="KEGG" id="vg:2942975"/>
<dbReference type="OrthoDB" id="26224at10239"/>
<dbReference type="Proteomes" id="UP000002123">
    <property type="component" value="Genome"/>
</dbReference>
<gene>
    <name type="primary">78</name>
</gene>
<name>VG78_BPML5</name>
<sequence length="45" mass="5494">MKKMSDQLKARLELRLSNAAQPHRNRKREMKRPGKGNRNNWKKEY</sequence>
<organism>
    <name type="scientific">Mycobacterium phage L5</name>
    <name type="common">Mycobacteriophage L5</name>
    <dbReference type="NCBI Taxonomy" id="31757"/>
    <lineage>
        <taxon>Viruses</taxon>
        <taxon>Duplodnaviria</taxon>
        <taxon>Heunggongvirae</taxon>
        <taxon>Uroviricota</taxon>
        <taxon>Caudoviricetes</taxon>
        <taxon>Fromanvirus</taxon>
    </lineage>
</organism>
<reference key="1">
    <citation type="journal article" date="1993" name="Mol. Microbiol.">
        <title>DNA sequence, structure and gene expression of mycobacteriophage L5: a phage system for mycobacterial genetics.</title>
        <authorList>
            <person name="Hatfull G.F."/>
            <person name="Sarkis G.J."/>
        </authorList>
    </citation>
    <scope>NUCLEOTIDE SEQUENCE [LARGE SCALE GENOMIC DNA]</scope>
</reference>
<organismHost>
    <name type="scientific">Mycobacterium</name>
    <dbReference type="NCBI Taxonomy" id="1763"/>
</organismHost>
<evidence type="ECO:0000256" key="1">
    <source>
        <dbReference type="SAM" id="MobiDB-lite"/>
    </source>
</evidence>
<accession>Q05293</accession>
<proteinExistence type="predicted"/>
<protein>
    <recommendedName>
        <fullName>Gene 78 protein</fullName>
    </recommendedName>
    <alternativeName>
        <fullName>Gp78</fullName>
    </alternativeName>
</protein>
<feature type="chain" id="PRO_0000164821" description="Gene 78 protein">
    <location>
        <begin position="1"/>
        <end position="45"/>
    </location>
</feature>
<feature type="region of interest" description="Disordered" evidence="1">
    <location>
        <begin position="1"/>
        <end position="45"/>
    </location>
</feature>
<feature type="compositionally biased region" description="Basic and acidic residues" evidence="1">
    <location>
        <begin position="1"/>
        <end position="14"/>
    </location>
</feature>
<feature type="compositionally biased region" description="Basic residues" evidence="1">
    <location>
        <begin position="23"/>
        <end position="35"/>
    </location>
</feature>